<protein>
    <recommendedName>
        <fullName evidence="1">ATP-dependent Clp protease ATP-binding subunit ClpX</fullName>
    </recommendedName>
</protein>
<proteinExistence type="inferred from homology"/>
<accession>B7LME1</accession>
<sequence length="424" mass="46393">MTDKRKDGSGKLLYCSFCGKSQHEVRKLIAGPSVYICDECVDLCNDIIREEIKEVAPHRERSALPTPHEIRHHLDDYVIGQEQAKKVLAVAVYNHYKRLRNGDTSNGVELGKSNILLIGPTGSGKTLLAETLARLLDVPFTMADATTLTEAGYVGEDVENIIQKLLQKCDYDVQKAQRGIVYIDEIDKISRKSDNPSITRDVSGEGVQQALLKLIEGTVAAVPPQGGRKHPQQEFLQVDTSKILFICGGAFAGLDKVISHRVETGSGIGFGATVKAKSDKASEGELLAQVEPEDLIKFGLIPEFIGRLPVVATLNELSEEALIQILKEPKNALTKQYQALFNLEGVDLEFRDEALDAIAKKAMARKTGARGLRSIVEAALLDTMYDLPSMEDVEKVVIDESVIEGQSKPLLIYGKPEAQQASGE</sequence>
<feature type="chain" id="PRO_1000118371" description="ATP-dependent Clp protease ATP-binding subunit ClpX">
    <location>
        <begin position="1"/>
        <end position="424"/>
    </location>
</feature>
<feature type="domain" description="ClpX-type ZB" evidence="2">
    <location>
        <begin position="2"/>
        <end position="56"/>
    </location>
</feature>
<feature type="binding site" evidence="2">
    <location>
        <position position="15"/>
    </location>
    <ligand>
        <name>Zn(2+)</name>
        <dbReference type="ChEBI" id="CHEBI:29105"/>
    </ligand>
</feature>
<feature type="binding site" evidence="2">
    <location>
        <position position="18"/>
    </location>
    <ligand>
        <name>Zn(2+)</name>
        <dbReference type="ChEBI" id="CHEBI:29105"/>
    </ligand>
</feature>
<feature type="binding site" evidence="2">
    <location>
        <position position="37"/>
    </location>
    <ligand>
        <name>Zn(2+)</name>
        <dbReference type="ChEBI" id="CHEBI:29105"/>
    </ligand>
</feature>
<feature type="binding site" evidence="2">
    <location>
        <position position="40"/>
    </location>
    <ligand>
        <name>Zn(2+)</name>
        <dbReference type="ChEBI" id="CHEBI:29105"/>
    </ligand>
</feature>
<feature type="binding site" evidence="1">
    <location>
        <begin position="120"/>
        <end position="127"/>
    </location>
    <ligand>
        <name>ATP</name>
        <dbReference type="ChEBI" id="CHEBI:30616"/>
    </ligand>
</feature>
<reference key="1">
    <citation type="journal article" date="2009" name="PLoS Genet.">
        <title>Organised genome dynamics in the Escherichia coli species results in highly diverse adaptive paths.</title>
        <authorList>
            <person name="Touchon M."/>
            <person name="Hoede C."/>
            <person name="Tenaillon O."/>
            <person name="Barbe V."/>
            <person name="Baeriswyl S."/>
            <person name="Bidet P."/>
            <person name="Bingen E."/>
            <person name="Bonacorsi S."/>
            <person name="Bouchier C."/>
            <person name="Bouvet O."/>
            <person name="Calteau A."/>
            <person name="Chiapello H."/>
            <person name="Clermont O."/>
            <person name="Cruveiller S."/>
            <person name="Danchin A."/>
            <person name="Diard M."/>
            <person name="Dossat C."/>
            <person name="Karoui M.E."/>
            <person name="Frapy E."/>
            <person name="Garry L."/>
            <person name="Ghigo J.M."/>
            <person name="Gilles A.M."/>
            <person name="Johnson J."/>
            <person name="Le Bouguenec C."/>
            <person name="Lescat M."/>
            <person name="Mangenot S."/>
            <person name="Martinez-Jehanne V."/>
            <person name="Matic I."/>
            <person name="Nassif X."/>
            <person name="Oztas S."/>
            <person name="Petit M.A."/>
            <person name="Pichon C."/>
            <person name="Rouy Z."/>
            <person name="Ruf C.S."/>
            <person name="Schneider D."/>
            <person name="Tourret J."/>
            <person name="Vacherie B."/>
            <person name="Vallenet D."/>
            <person name="Medigue C."/>
            <person name="Rocha E.P.C."/>
            <person name="Denamur E."/>
        </authorList>
    </citation>
    <scope>NUCLEOTIDE SEQUENCE [LARGE SCALE GENOMIC DNA]</scope>
    <source>
        <strain>ATCC 35469 / DSM 13698 / BCRC 15582 / CCUG 18766 / IAM 14443 / JCM 21226 / LMG 7866 / NBRC 102419 / NCTC 12128 / CDC 0568-73</strain>
    </source>
</reference>
<evidence type="ECO:0000255" key="1">
    <source>
        <dbReference type="HAMAP-Rule" id="MF_00175"/>
    </source>
</evidence>
<evidence type="ECO:0000255" key="2">
    <source>
        <dbReference type="PROSITE-ProRule" id="PRU01250"/>
    </source>
</evidence>
<comment type="function">
    <text evidence="1">ATP-dependent specificity component of the Clp protease. It directs the protease to specific substrates. Can perform chaperone functions in the absence of ClpP.</text>
</comment>
<comment type="subunit">
    <text evidence="1">Component of the ClpX-ClpP complex. Forms a hexameric ring that, in the presence of ATP, binds to fourteen ClpP subunits assembled into a disk-like structure with a central cavity, resembling the structure of eukaryotic proteasomes.</text>
</comment>
<comment type="similarity">
    <text evidence="1">Belongs to the ClpX chaperone family.</text>
</comment>
<gene>
    <name evidence="1" type="primary">clpX</name>
    <name type="ordered locus">EFER_2579</name>
</gene>
<keyword id="KW-0067">ATP-binding</keyword>
<keyword id="KW-0143">Chaperone</keyword>
<keyword id="KW-0479">Metal-binding</keyword>
<keyword id="KW-0547">Nucleotide-binding</keyword>
<keyword id="KW-0862">Zinc</keyword>
<name>CLPX_ESCF3</name>
<dbReference type="EMBL" id="CU928158">
    <property type="protein sequence ID" value="CAQ90074.1"/>
    <property type="molecule type" value="Genomic_DNA"/>
</dbReference>
<dbReference type="RefSeq" id="WP_000130292.1">
    <property type="nucleotide sequence ID" value="NC_011740.1"/>
</dbReference>
<dbReference type="SMR" id="B7LME1"/>
<dbReference type="GeneID" id="75056390"/>
<dbReference type="KEGG" id="efe:EFER_2579"/>
<dbReference type="HOGENOM" id="CLU_014218_8_2_6"/>
<dbReference type="OrthoDB" id="9804062at2"/>
<dbReference type="Proteomes" id="UP000000745">
    <property type="component" value="Chromosome"/>
</dbReference>
<dbReference type="GO" id="GO:0009376">
    <property type="term" value="C:HslUV protease complex"/>
    <property type="evidence" value="ECO:0007669"/>
    <property type="project" value="TreeGrafter"/>
</dbReference>
<dbReference type="GO" id="GO:0005524">
    <property type="term" value="F:ATP binding"/>
    <property type="evidence" value="ECO:0007669"/>
    <property type="project" value="UniProtKB-UniRule"/>
</dbReference>
<dbReference type="GO" id="GO:0016887">
    <property type="term" value="F:ATP hydrolysis activity"/>
    <property type="evidence" value="ECO:0007669"/>
    <property type="project" value="InterPro"/>
</dbReference>
<dbReference type="GO" id="GO:0140662">
    <property type="term" value="F:ATP-dependent protein folding chaperone"/>
    <property type="evidence" value="ECO:0007669"/>
    <property type="project" value="InterPro"/>
</dbReference>
<dbReference type="GO" id="GO:0046983">
    <property type="term" value="F:protein dimerization activity"/>
    <property type="evidence" value="ECO:0007669"/>
    <property type="project" value="InterPro"/>
</dbReference>
<dbReference type="GO" id="GO:0051082">
    <property type="term" value="F:unfolded protein binding"/>
    <property type="evidence" value="ECO:0007669"/>
    <property type="project" value="UniProtKB-UniRule"/>
</dbReference>
<dbReference type="GO" id="GO:0008270">
    <property type="term" value="F:zinc ion binding"/>
    <property type="evidence" value="ECO:0007669"/>
    <property type="project" value="InterPro"/>
</dbReference>
<dbReference type="GO" id="GO:0051301">
    <property type="term" value="P:cell division"/>
    <property type="evidence" value="ECO:0007669"/>
    <property type="project" value="TreeGrafter"/>
</dbReference>
<dbReference type="GO" id="GO:0051603">
    <property type="term" value="P:proteolysis involved in protein catabolic process"/>
    <property type="evidence" value="ECO:0007669"/>
    <property type="project" value="TreeGrafter"/>
</dbReference>
<dbReference type="CDD" id="cd19497">
    <property type="entry name" value="RecA-like_ClpX"/>
    <property type="match status" value="1"/>
</dbReference>
<dbReference type="FunFam" id="1.10.8.60:FF:000002">
    <property type="entry name" value="ATP-dependent Clp protease ATP-binding subunit ClpX"/>
    <property type="match status" value="1"/>
</dbReference>
<dbReference type="FunFam" id="3.40.50.300:FF:000005">
    <property type="entry name" value="ATP-dependent Clp protease ATP-binding subunit ClpX"/>
    <property type="match status" value="1"/>
</dbReference>
<dbReference type="Gene3D" id="1.10.8.60">
    <property type="match status" value="1"/>
</dbReference>
<dbReference type="Gene3D" id="6.20.220.10">
    <property type="entry name" value="ClpX chaperone, C4-type zinc finger domain"/>
    <property type="match status" value="1"/>
</dbReference>
<dbReference type="Gene3D" id="3.40.50.300">
    <property type="entry name" value="P-loop containing nucleotide triphosphate hydrolases"/>
    <property type="match status" value="1"/>
</dbReference>
<dbReference type="HAMAP" id="MF_00175">
    <property type="entry name" value="ClpX"/>
    <property type="match status" value="1"/>
</dbReference>
<dbReference type="InterPro" id="IPR003593">
    <property type="entry name" value="AAA+_ATPase"/>
</dbReference>
<dbReference type="InterPro" id="IPR050052">
    <property type="entry name" value="ATP-dep_Clp_protease_ClpX"/>
</dbReference>
<dbReference type="InterPro" id="IPR003959">
    <property type="entry name" value="ATPase_AAA_core"/>
</dbReference>
<dbReference type="InterPro" id="IPR019489">
    <property type="entry name" value="Clp_ATPase_C"/>
</dbReference>
<dbReference type="InterPro" id="IPR004487">
    <property type="entry name" value="Clp_protease_ATP-bd_su_ClpX"/>
</dbReference>
<dbReference type="InterPro" id="IPR046425">
    <property type="entry name" value="ClpX_bact"/>
</dbReference>
<dbReference type="InterPro" id="IPR027417">
    <property type="entry name" value="P-loop_NTPase"/>
</dbReference>
<dbReference type="InterPro" id="IPR010603">
    <property type="entry name" value="Znf_CppX_C4"/>
</dbReference>
<dbReference type="InterPro" id="IPR038366">
    <property type="entry name" value="Znf_CppX_C4_sf"/>
</dbReference>
<dbReference type="NCBIfam" id="TIGR00382">
    <property type="entry name" value="clpX"/>
    <property type="match status" value="1"/>
</dbReference>
<dbReference type="NCBIfam" id="NF003745">
    <property type="entry name" value="PRK05342.1"/>
    <property type="match status" value="1"/>
</dbReference>
<dbReference type="PANTHER" id="PTHR48102:SF7">
    <property type="entry name" value="ATP-DEPENDENT CLP PROTEASE ATP-BINDING SUBUNIT CLPX-LIKE, MITOCHONDRIAL"/>
    <property type="match status" value="1"/>
</dbReference>
<dbReference type="PANTHER" id="PTHR48102">
    <property type="entry name" value="ATP-DEPENDENT CLP PROTEASE ATP-BINDING SUBUNIT CLPX-LIKE, MITOCHONDRIAL-RELATED"/>
    <property type="match status" value="1"/>
</dbReference>
<dbReference type="Pfam" id="PF07724">
    <property type="entry name" value="AAA_2"/>
    <property type="match status" value="1"/>
</dbReference>
<dbReference type="Pfam" id="PF10431">
    <property type="entry name" value="ClpB_D2-small"/>
    <property type="match status" value="1"/>
</dbReference>
<dbReference type="Pfam" id="PF06689">
    <property type="entry name" value="zf-C4_ClpX"/>
    <property type="match status" value="1"/>
</dbReference>
<dbReference type="SMART" id="SM00382">
    <property type="entry name" value="AAA"/>
    <property type="match status" value="1"/>
</dbReference>
<dbReference type="SMART" id="SM01086">
    <property type="entry name" value="ClpB_D2-small"/>
    <property type="match status" value="1"/>
</dbReference>
<dbReference type="SMART" id="SM00994">
    <property type="entry name" value="zf-C4_ClpX"/>
    <property type="match status" value="1"/>
</dbReference>
<dbReference type="SUPFAM" id="SSF57716">
    <property type="entry name" value="Glucocorticoid receptor-like (DNA-binding domain)"/>
    <property type="match status" value="1"/>
</dbReference>
<dbReference type="SUPFAM" id="SSF52540">
    <property type="entry name" value="P-loop containing nucleoside triphosphate hydrolases"/>
    <property type="match status" value="1"/>
</dbReference>
<dbReference type="PROSITE" id="PS51902">
    <property type="entry name" value="CLPX_ZB"/>
    <property type="match status" value="1"/>
</dbReference>
<organism>
    <name type="scientific">Escherichia fergusonii (strain ATCC 35469 / DSM 13698 / CCUG 18766 / IAM 14443 / JCM 21226 / LMG 7866 / NBRC 102419 / NCTC 12128 / CDC 0568-73)</name>
    <dbReference type="NCBI Taxonomy" id="585054"/>
    <lineage>
        <taxon>Bacteria</taxon>
        <taxon>Pseudomonadati</taxon>
        <taxon>Pseudomonadota</taxon>
        <taxon>Gammaproteobacteria</taxon>
        <taxon>Enterobacterales</taxon>
        <taxon>Enterobacteriaceae</taxon>
        <taxon>Escherichia</taxon>
    </lineage>
</organism>